<proteinExistence type="inferred from homology"/>
<reference key="1">
    <citation type="journal article" date="2008" name="DNA Res.">
        <title>Determination of the genome sequence of Porphyromonas gingivalis strain ATCC 33277 and genomic comparison with strain W83 revealed extensive genome rearrangements in P. gingivalis.</title>
        <authorList>
            <person name="Naito M."/>
            <person name="Hirakawa H."/>
            <person name="Yamashita A."/>
            <person name="Ohara N."/>
            <person name="Shoji M."/>
            <person name="Yukitake H."/>
            <person name="Nakayama K."/>
            <person name="Toh H."/>
            <person name="Yoshimura F."/>
            <person name="Kuhara S."/>
            <person name="Hattori M."/>
            <person name="Hayashi T."/>
            <person name="Nakayama K."/>
        </authorList>
    </citation>
    <scope>NUCLEOTIDE SEQUENCE [LARGE SCALE GENOMIC DNA]</scope>
    <source>
        <strain>ATCC 33277 / DSM 20709 / CIP 103683 / JCM 12257 / NCTC 11834 / 2561</strain>
    </source>
</reference>
<gene>
    <name evidence="1" type="primary">rpsN</name>
    <name type="ordered locus">PGN_1855</name>
</gene>
<name>RS14_PORG3</name>
<dbReference type="EMBL" id="AP009380">
    <property type="protein sequence ID" value="BAG34374.1"/>
    <property type="molecule type" value="Genomic_DNA"/>
</dbReference>
<dbReference type="RefSeq" id="WP_004583585.1">
    <property type="nucleotide sequence ID" value="NZ_CP025930.1"/>
</dbReference>
<dbReference type="SMR" id="B2RLX9"/>
<dbReference type="GeneID" id="57239583"/>
<dbReference type="KEGG" id="pgn:PGN_1855"/>
<dbReference type="eggNOG" id="COG0199">
    <property type="taxonomic scope" value="Bacteria"/>
</dbReference>
<dbReference type="HOGENOM" id="CLU_139869_0_0_10"/>
<dbReference type="OrthoDB" id="9810484at2"/>
<dbReference type="BioCyc" id="PGIN431947:G1G2V-2069-MONOMER"/>
<dbReference type="Proteomes" id="UP000008842">
    <property type="component" value="Chromosome"/>
</dbReference>
<dbReference type="GO" id="GO:0005737">
    <property type="term" value="C:cytoplasm"/>
    <property type="evidence" value="ECO:0007669"/>
    <property type="project" value="UniProtKB-ARBA"/>
</dbReference>
<dbReference type="GO" id="GO:0015935">
    <property type="term" value="C:small ribosomal subunit"/>
    <property type="evidence" value="ECO:0007669"/>
    <property type="project" value="TreeGrafter"/>
</dbReference>
<dbReference type="GO" id="GO:0019843">
    <property type="term" value="F:rRNA binding"/>
    <property type="evidence" value="ECO:0007669"/>
    <property type="project" value="UniProtKB-UniRule"/>
</dbReference>
<dbReference type="GO" id="GO:0003735">
    <property type="term" value="F:structural constituent of ribosome"/>
    <property type="evidence" value="ECO:0007669"/>
    <property type="project" value="InterPro"/>
</dbReference>
<dbReference type="GO" id="GO:0006412">
    <property type="term" value="P:translation"/>
    <property type="evidence" value="ECO:0007669"/>
    <property type="project" value="UniProtKB-UniRule"/>
</dbReference>
<dbReference type="FunFam" id="1.10.287.1480:FF:000001">
    <property type="entry name" value="30S ribosomal protein S14"/>
    <property type="match status" value="1"/>
</dbReference>
<dbReference type="Gene3D" id="4.10.830.10">
    <property type="entry name" value="30s Ribosomal Protein S14, Chain N"/>
    <property type="match status" value="1"/>
</dbReference>
<dbReference type="HAMAP" id="MF_00537">
    <property type="entry name" value="Ribosomal_uS14_1"/>
    <property type="match status" value="1"/>
</dbReference>
<dbReference type="InterPro" id="IPR001209">
    <property type="entry name" value="Ribosomal_uS14"/>
</dbReference>
<dbReference type="InterPro" id="IPR023036">
    <property type="entry name" value="Ribosomal_uS14_bac/plastid"/>
</dbReference>
<dbReference type="InterPro" id="IPR018271">
    <property type="entry name" value="Ribosomal_uS14_CS"/>
</dbReference>
<dbReference type="InterPro" id="IPR043140">
    <property type="entry name" value="Ribosomal_uS14_sf"/>
</dbReference>
<dbReference type="NCBIfam" id="NF006477">
    <property type="entry name" value="PRK08881.1"/>
    <property type="match status" value="1"/>
</dbReference>
<dbReference type="PANTHER" id="PTHR19836">
    <property type="entry name" value="30S RIBOSOMAL PROTEIN S14"/>
    <property type="match status" value="1"/>
</dbReference>
<dbReference type="PANTHER" id="PTHR19836:SF19">
    <property type="entry name" value="SMALL RIBOSOMAL SUBUNIT PROTEIN US14M"/>
    <property type="match status" value="1"/>
</dbReference>
<dbReference type="Pfam" id="PF00253">
    <property type="entry name" value="Ribosomal_S14"/>
    <property type="match status" value="1"/>
</dbReference>
<dbReference type="SUPFAM" id="SSF57716">
    <property type="entry name" value="Glucocorticoid receptor-like (DNA-binding domain)"/>
    <property type="match status" value="1"/>
</dbReference>
<dbReference type="PROSITE" id="PS00527">
    <property type="entry name" value="RIBOSOMAL_S14"/>
    <property type="match status" value="1"/>
</dbReference>
<comment type="function">
    <text evidence="1">Binds 16S rRNA, required for the assembly of 30S particles and may also be responsible for determining the conformation of the 16S rRNA at the A site.</text>
</comment>
<comment type="subunit">
    <text evidence="1">Part of the 30S ribosomal subunit. Contacts proteins S3 and S10.</text>
</comment>
<comment type="similarity">
    <text evidence="1">Belongs to the universal ribosomal protein uS14 family.</text>
</comment>
<protein>
    <recommendedName>
        <fullName evidence="1">Small ribosomal subunit protein uS14</fullName>
    </recommendedName>
    <alternativeName>
        <fullName evidence="2">30S ribosomal protein S14</fullName>
    </alternativeName>
</protein>
<sequence length="89" mass="9950">MAKESMKAREVKRAKLVAKYAAKRAALKAEGNYEALQLLPKNASPVRLHNRCSMTGRPKGYMRQFGISRIQFREMASAGLIPGVKKASW</sequence>
<feature type="chain" id="PRO_1000128493" description="Small ribosomal subunit protein uS14">
    <location>
        <begin position="1"/>
        <end position="89"/>
    </location>
</feature>
<accession>B2RLX9</accession>
<organism>
    <name type="scientific">Porphyromonas gingivalis (strain ATCC 33277 / DSM 20709 / CIP 103683 / JCM 12257 / NCTC 11834 / 2561)</name>
    <dbReference type="NCBI Taxonomy" id="431947"/>
    <lineage>
        <taxon>Bacteria</taxon>
        <taxon>Pseudomonadati</taxon>
        <taxon>Bacteroidota</taxon>
        <taxon>Bacteroidia</taxon>
        <taxon>Bacteroidales</taxon>
        <taxon>Porphyromonadaceae</taxon>
        <taxon>Porphyromonas</taxon>
    </lineage>
</organism>
<keyword id="KW-0687">Ribonucleoprotein</keyword>
<keyword id="KW-0689">Ribosomal protein</keyword>
<keyword id="KW-0694">RNA-binding</keyword>
<keyword id="KW-0699">rRNA-binding</keyword>
<evidence type="ECO:0000255" key="1">
    <source>
        <dbReference type="HAMAP-Rule" id="MF_00537"/>
    </source>
</evidence>
<evidence type="ECO:0000305" key="2"/>